<feature type="chain" id="PRO_1000135541" description="Glucose-6-phosphate isomerase">
    <location>
        <begin position="1"/>
        <end position="550"/>
    </location>
</feature>
<feature type="active site" description="Proton donor" evidence="1">
    <location>
        <position position="356"/>
    </location>
</feature>
<feature type="active site" evidence="1">
    <location>
        <position position="387"/>
    </location>
</feature>
<feature type="active site" evidence="1">
    <location>
        <position position="515"/>
    </location>
</feature>
<evidence type="ECO:0000255" key="1">
    <source>
        <dbReference type="HAMAP-Rule" id="MF_00473"/>
    </source>
</evidence>
<name>G6PI_VIBA3</name>
<keyword id="KW-0963">Cytoplasm</keyword>
<keyword id="KW-0312">Gluconeogenesis</keyword>
<keyword id="KW-0324">Glycolysis</keyword>
<keyword id="KW-0413">Isomerase</keyword>
<reference key="1">
    <citation type="submission" date="2009-02" db="EMBL/GenBank/DDBJ databases">
        <title>Vibrio splendidus str. LGP32 complete genome.</title>
        <authorList>
            <person name="Mazel D."/>
            <person name="Le Roux F."/>
        </authorList>
    </citation>
    <scope>NUCLEOTIDE SEQUENCE [LARGE SCALE GENOMIC DNA]</scope>
    <source>
        <strain>LGP32</strain>
    </source>
</reference>
<organism>
    <name type="scientific">Vibrio atlanticus (strain LGP32)</name>
    <name type="common">Vibrio splendidus (strain Mel32)</name>
    <dbReference type="NCBI Taxonomy" id="575788"/>
    <lineage>
        <taxon>Bacteria</taxon>
        <taxon>Pseudomonadati</taxon>
        <taxon>Pseudomonadota</taxon>
        <taxon>Gammaproteobacteria</taxon>
        <taxon>Vibrionales</taxon>
        <taxon>Vibrionaceae</taxon>
        <taxon>Vibrio</taxon>
    </lineage>
</organism>
<accession>B7VI73</accession>
<comment type="function">
    <text evidence="1">Catalyzes the reversible isomerization of glucose-6-phosphate to fructose-6-phosphate.</text>
</comment>
<comment type="catalytic activity">
    <reaction evidence="1">
        <text>alpha-D-glucose 6-phosphate = beta-D-fructose 6-phosphate</text>
        <dbReference type="Rhea" id="RHEA:11816"/>
        <dbReference type="ChEBI" id="CHEBI:57634"/>
        <dbReference type="ChEBI" id="CHEBI:58225"/>
        <dbReference type="EC" id="5.3.1.9"/>
    </reaction>
</comment>
<comment type="pathway">
    <text evidence="1">Carbohydrate biosynthesis; gluconeogenesis.</text>
</comment>
<comment type="pathway">
    <text evidence="1">Carbohydrate degradation; glycolysis; D-glyceraldehyde 3-phosphate and glycerone phosphate from D-glucose: step 2/4.</text>
</comment>
<comment type="subcellular location">
    <subcellularLocation>
        <location evidence="1">Cytoplasm</location>
    </subcellularLocation>
</comment>
<comment type="similarity">
    <text evidence="1">Belongs to the GPI family.</text>
</comment>
<proteinExistence type="inferred from homology"/>
<dbReference type="EC" id="5.3.1.9" evidence="1"/>
<dbReference type="EMBL" id="FM954972">
    <property type="protein sequence ID" value="CAV17310.1"/>
    <property type="molecule type" value="Genomic_DNA"/>
</dbReference>
<dbReference type="SMR" id="B7VI73"/>
<dbReference type="STRING" id="575788.VS_0288"/>
<dbReference type="KEGG" id="vsp:VS_0288"/>
<dbReference type="PATRIC" id="fig|575788.5.peg.1667"/>
<dbReference type="eggNOG" id="COG0166">
    <property type="taxonomic scope" value="Bacteria"/>
</dbReference>
<dbReference type="HOGENOM" id="CLU_017947_3_1_6"/>
<dbReference type="UniPathway" id="UPA00109">
    <property type="reaction ID" value="UER00181"/>
</dbReference>
<dbReference type="UniPathway" id="UPA00138"/>
<dbReference type="Proteomes" id="UP000009100">
    <property type="component" value="Chromosome 1"/>
</dbReference>
<dbReference type="GO" id="GO:0005829">
    <property type="term" value="C:cytosol"/>
    <property type="evidence" value="ECO:0007669"/>
    <property type="project" value="TreeGrafter"/>
</dbReference>
<dbReference type="GO" id="GO:0097367">
    <property type="term" value="F:carbohydrate derivative binding"/>
    <property type="evidence" value="ECO:0007669"/>
    <property type="project" value="InterPro"/>
</dbReference>
<dbReference type="GO" id="GO:0004347">
    <property type="term" value="F:glucose-6-phosphate isomerase activity"/>
    <property type="evidence" value="ECO:0007669"/>
    <property type="project" value="UniProtKB-UniRule"/>
</dbReference>
<dbReference type="GO" id="GO:0048029">
    <property type="term" value="F:monosaccharide binding"/>
    <property type="evidence" value="ECO:0007669"/>
    <property type="project" value="TreeGrafter"/>
</dbReference>
<dbReference type="GO" id="GO:0006094">
    <property type="term" value="P:gluconeogenesis"/>
    <property type="evidence" value="ECO:0007669"/>
    <property type="project" value="UniProtKB-UniRule"/>
</dbReference>
<dbReference type="GO" id="GO:0051156">
    <property type="term" value="P:glucose 6-phosphate metabolic process"/>
    <property type="evidence" value="ECO:0007669"/>
    <property type="project" value="TreeGrafter"/>
</dbReference>
<dbReference type="GO" id="GO:0006096">
    <property type="term" value="P:glycolytic process"/>
    <property type="evidence" value="ECO:0007669"/>
    <property type="project" value="UniProtKB-UniRule"/>
</dbReference>
<dbReference type="CDD" id="cd05015">
    <property type="entry name" value="SIS_PGI_1"/>
    <property type="match status" value="1"/>
</dbReference>
<dbReference type="CDD" id="cd05016">
    <property type="entry name" value="SIS_PGI_2"/>
    <property type="match status" value="1"/>
</dbReference>
<dbReference type="FunFam" id="1.10.1390.10:FF:000001">
    <property type="entry name" value="Glucose-6-phosphate isomerase"/>
    <property type="match status" value="1"/>
</dbReference>
<dbReference type="FunFam" id="3.40.50.10490:FF:000004">
    <property type="entry name" value="Glucose-6-phosphate isomerase"/>
    <property type="match status" value="1"/>
</dbReference>
<dbReference type="Gene3D" id="1.10.1390.10">
    <property type="match status" value="1"/>
</dbReference>
<dbReference type="Gene3D" id="3.40.50.10490">
    <property type="entry name" value="Glucose-6-phosphate isomerase like protein, domain 1"/>
    <property type="match status" value="2"/>
</dbReference>
<dbReference type="HAMAP" id="MF_00473">
    <property type="entry name" value="G6P_isomerase"/>
    <property type="match status" value="1"/>
</dbReference>
<dbReference type="InterPro" id="IPR001672">
    <property type="entry name" value="G6P_Isomerase"/>
</dbReference>
<dbReference type="InterPro" id="IPR023096">
    <property type="entry name" value="G6P_Isomerase_C"/>
</dbReference>
<dbReference type="InterPro" id="IPR018189">
    <property type="entry name" value="Phosphoglucose_isomerase_CS"/>
</dbReference>
<dbReference type="InterPro" id="IPR046348">
    <property type="entry name" value="SIS_dom_sf"/>
</dbReference>
<dbReference type="InterPro" id="IPR035476">
    <property type="entry name" value="SIS_PGI_1"/>
</dbReference>
<dbReference type="InterPro" id="IPR035482">
    <property type="entry name" value="SIS_PGI_2"/>
</dbReference>
<dbReference type="NCBIfam" id="NF001211">
    <property type="entry name" value="PRK00179.1"/>
    <property type="match status" value="1"/>
</dbReference>
<dbReference type="PANTHER" id="PTHR11469">
    <property type="entry name" value="GLUCOSE-6-PHOSPHATE ISOMERASE"/>
    <property type="match status" value="1"/>
</dbReference>
<dbReference type="PANTHER" id="PTHR11469:SF1">
    <property type="entry name" value="GLUCOSE-6-PHOSPHATE ISOMERASE"/>
    <property type="match status" value="1"/>
</dbReference>
<dbReference type="Pfam" id="PF00342">
    <property type="entry name" value="PGI"/>
    <property type="match status" value="1"/>
</dbReference>
<dbReference type="PRINTS" id="PR00662">
    <property type="entry name" value="G6PISOMERASE"/>
</dbReference>
<dbReference type="SUPFAM" id="SSF53697">
    <property type="entry name" value="SIS domain"/>
    <property type="match status" value="1"/>
</dbReference>
<dbReference type="PROSITE" id="PS00765">
    <property type="entry name" value="P_GLUCOSE_ISOMERASE_1"/>
    <property type="match status" value="1"/>
</dbReference>
<dbReference type="PROSITE" id="PS00174">
    <property type="entry name" value="P_GLUCOSE_ISOMERASE_2"/>
    <property type="match status" value="1"/>
</dbReference>
<dbReference type="PROSITE" id="PS51463">
    <property type="entry name" value="P_GLUCOSE_ISOMERASE_3"/>
    <property type="match status" value="1"/>
</dbReference>
<sequence length="550" mass="60970">MLKNINPTQTQAWKALTAHFESAQDMDMKELFAQDAKRFESFSTRFGSDILVDYSKNLIDAETMQHLFALANETEVKSAIEAMFGGDAINKTEGRSVLHTALRNRSDKPVMVDGKDVMPAVNAVLAKMELFTHRIVSGEWKGYTGKEITDVVNIGIGGSDLGPYMVTEALTPYKTRLNMHFVSNVDGTHIVETLKPLNPETTLFLVASKTFTTQETMTNAHSARDWFLAEAGDSAHVAKHFAALSTNAASVAEFGIDTDNMFEFWDWVGGRYSLWSAIGLSISLSIGFDNFAELLDGAHEMDNHFASTEFESNIPVILALIGVWYNNFHGAESEAILPYDQYMHRFAAYFQQGNMESNGKFVDREGNPVEYQTGPIIWGEPGTNGQHAFYQLIHQGTKLIPSDFIAPAISHNPASDHHQKLMSNFFAQTEALAFGKTKETVEAEFLAAGKTAEEVAELVPFKVFEGNRPTNSILVKQINPRSLGNLIAMYEHKIFVQGVIWNIFSFDQWGVELGKQLANQILPELADDAQVTSHDSSTNGLINAFKALKA</sequence>
<protein>
    <recommendedName>
        <fullName evidence="1">Glucose-6-phosphate isomerase</fullName>
        <shortName evidence="1">GPI</shortName>
        <ecNumber evidence="1">5.3.1.9</ecNumber>
    </recommendedName>
    <alternativeName>
        <fullName evidence="1">Phosphoglucose isomerase</fullName>
        <shortName evidence="1">PGI</shortName>
    </alternativeName>
    <alternativeName>
        <fullName evidence="1">Phosphohexose isomerase</fullName>
        <shortName evidence="1">PHI</shortName>
    </alternativeName>
</protein>
<gene>
    <name evidence="1" type="primary">pgi</name>
    <name type="ordered locus">VS_0288</name>
</gene>